<accession>B6JP37</accession>
<comment type="function">
    <text evidence="1">Involved in the regulation of the intracellular balance of NAD and NADP, and is a key enzyme in the biosynthesis of NADP. Catalyzes specifically the phosphorylation on 2'-hydroxyl of the adenosine moiety of NAD to yield NADP.</text>
</comment>
<comment type="catalytic activity">
    <reaction evidence="1">
        <text>NAD(+) + ATP = ADP + NADP(+) + H(+)</text>
        <dbReference type="Rhea" id="RHEA:18629"/>
        <dbReference type="ChEBI" id="CHEBI:15378"/>
        <dbReference type="ChEBI" id="CHEBI:30616"/>
        <dbReference type="ChEBI" id="CHEBI:57540"/>
        <dbReference type="ChEBI" id="CHEBI:58349"/>
        <dbReference type="ChEBI" id="CHEBI:456216"/>
        <dbReference type="EC" id="2.7.1.23"/>
    </reaction>
</comment>
<comment type="cofactor">
    <cofactor evidence="1">
        <name>a divalent metal cation</name>
        <dbReference type="ChEBI" id="CHEBI:60240"/>
    </cofactor>
</comment>
<comment type="subcellular location">
    <subcellularLocation>
        <location evidence="1">Cytoplasm</location>
    </subcellularLocation>
</comment>
<comment type="similarity">
    <text evidence="1">Belongs to the NAD kinase family.</text>
</comment>
<protein>
    <recommendedName>
        <fullName evidence="1">NAD kinase</fullName>
        <ecNumber evidence="1">2.7.1.23</ecNumber>
    </recommendedName>
    <alternativeName>
        <fullName evidence="1">ATP-dependent NAD kinase</fullName>
    </alternativeName>
</protein>
<dbReference type="EC" id="2.7.1.23" evidence="1"/>
<dbReference type="EMBL" id="CP001217">
    <property type="protein sequence ID" value="ACJ08665.1"/>
    <property type="molecule type" value="Genomic_DNA"/>
</dbReference>
<dbReference type="SMR" id="B6JP37"/>
<dbReference type="KEGG" id="hpp:HPP12_1519"/>
<dbReference type="HOGENOM" id="CLU_008831_0_3_7"/>
<dbReference type="Proteomes" id="UP000008198">
    <property type="component" value="Chromosome"/>
</dbReference>
<dbReference type="GO" id="GO:0005737">
    <property type="term" value="C:cytoplasm"/>
    <property type="evidence" value="ECO:0007669"/>
    <property type="project" value="UniProtKB-SubCell"/>
</dbReference>
<dbReference type="GO" id="GO:0005524">
    <property type="term" value="F:ATP binding"/>
    <property type="evidence" value="ECO:0007669"/>
    <property type="project" value="UniProtKB-KW"/>
</dbReference>
<dbReference type="GO" id="GO:0046872">
    <property type="term" value="F:metal ion binding"/>
    <property type="evidence" value="ECO:0007669"/>
    <property type="project" value="UniProtKB-UniRule"/>
</dbReference>
<dbReference type="GO" id="GO:0051287">
    <property type="term" value="F:NAD binding"/>
    <property type="evidence" value="ECO:0007669"/>
    <property type="project" value="UniProtKB-ARBA"/>
</dbReference>
<dbReference type="GO" id="GO:0003951">
    <property type="term" value="F:NAD+ kinase activity"/>
    <property type="evidence" value="ECO:0007669"/>
    <property type="project" value="UniProtKB-UniRule"/>
</dbReference>
<dbReference type="GO" id="GO:0019674">
    <property type="term" value="P:NAD metabolic process"/>
    <property type="evidence" value="ECO:0007669"/>
    <property type="project" value="InterPro"/>
</dbReference>
<dbReference type="GO" id="GO:0006741">
    <property type="term" value="P:NADP biosynthetic process"/>
    <property type="evidence" value="ECO:0007669"/>
    <property type="project" value="UniProtKB-UniRule"/>
</dbReference>
<dbReference type="Gene3D" id="3.40.50.10330">
    <property type="entry name" value="Probable inorganic polyphosphate/atp-NAD kinase, domain 1"/>
    <property type="match status" value="1"/>
</dbReference>
<dbReference type="Gene3D" id="2.60.200.30">
    <property type="entry name" value="Probable inorganic polyphosphate/atp-NAD kinase, domain 2"/>
    <property type="match status" value="1"/>
</dbReference>
<dbReference type="HAMAP" id="MF_00361">
    <property type="entry name" value="NAD_kinase"/>
    <property type="match status" value="1"/>
</dbReference>
<dbReference type="InterPro" id="IPR017438">
    <property type="entry name" value="ATP-NAD_kinase_N"/>
</dbReference>
<dbReference type="InterPro" id="IPR017437">
    <property type="entry name" value="ATP-NAD_kinase_PpnK-typ_C"/>
</dbReference>
<dbReference type="InterPro" id="IPR016064">
    <property type="entry name" value="NAD/diacylglycerol_kinase_sf"/>
</dbReference>
<dbReference type="InterPro" id="IPR002504">
    <property type="entry name" value="NADK"/>
</dbReference>
<dbReference type="PANTHER" id="PTHR20275">
    <property type="entry name" value="NAD KINASE"/>
    <property type="match status" value="1"/>
</dbReference>
<dbReference type="PANTHER" id="PTHR20275:SF0">
    <property type="entry name" value="NAD KINASE"/>
    <property type="match status" value="1"/>
</dbReference>
<dbReference type="Pfam" id="PF01513">
    <property type="entry name" value="NAD_kinase"/>
    <property type="match status" value="1"/>
</dbReference>
<dbReference type="Pfam" id="PF20143">
    <property type="entry name" value="NAD_kinase_C"/>
    <property type="match status" value="1"/>
</dbReference>
<dbReference type="SUPFAM" id="SSF111331">
    <property type="entry name" value="NAD kinase/diacylglycerol kinase-like"/>
    <property type="match status" value="1"/>
</dbReference>
<name>NADK_HELP2</name>
<evidence type="ECO:0000255" key="1">
    <source>
        <dbReference type="HAMAP-Rule" id="MF_00361"/>
    </source>
</evidence>
<gene>
    <name evidence="1" type="primary">nadK</name>
    <name type="ordered locus">HPP12_1519</name>
</gene>
<feature type="chain" id="PRO_1000120866" description="NAD kinase">
    <location>
        <begin position="1"/>
        <end position="284"/>
    </location>
</feature>
<feature type="active site" description="Proton acceptor" evidence="1">
    <location>
        <position position="70"/>
    </location>
</feature>
<feature type="binding site" evidence="1">
    <location>
        <begin position="70"/>
        <end position="71"/>
    </location>
    <ligand>
        <name>NAD(+)</name>
        <dbReference type="ChEBI" id="CHEBI:57540"/>
    </ligand>
</feature>
<feature type="binding site" evidence="1">
    <location>
        <begin position="139"/>
        <end position="140"/>
    </location>
    <ligand>
        <name>NAD(+)</name>
        <dbReference type="ChEBI" id="CHEBI:57540"/>
    </ligand>
</feature>
<feature type="binding site" evidence="1">
    <location>
        <position position="167"/>
    </location>
    <ligand>
        <name>NAD(+)</name>
        <dbReference type="ChEBI" id="CHEBI:57540"/>
    </ligand>
</feature>
<feature type="binding site" evidence="1">
    <location>
        <position position="169"/>
    </location>
    <ligand>
        <name>NAD(+)</name>
        <dbReference type="ChEBI" id="CHEBI:57540"/>
    </ligand>
</feature>
<feature type="binding site" evidence="1">
    <location>
        <position position="177"/>
    </location>
    <ligand>
        <name>NAD(+)</name>
        <dbReference type="ChEBI" id="CHEBI:57540"/>
    </ligand>
</feature>
<feature type="binding site" evidence="1">
    <location>
        <begin position="180"/>
        <end position="185"/>
    </location>
    <ligand>
        <name>NAD(+)</name>
        <dbReference type="ChEBI" id="CHEBI:57540"/>
    </ligand>
</feature>
<feature type="binding site" evidence="1">
    <location>
        <position position="236"/>
    </location>
    <ligand>
        <name>NAD(+)</name>
        <dbReference type="ChEBI" id="CHEBI:57540"/>
    </ligand>
</feature>
<proteinExistence type="inferred from homology"/>
<reference key="1">
    <citation type="submission" date="2008-10" db="EMBL/GenBank/DDBJ databases">
        <title>The complete genome sequence of Helicobacter pylori strain P12.</title>
        <authorList>
            <person name="Fischer W."/>
            <person name="Windhager L."/>
            <person name="Karnholz A."/>
            <person name="Zeiller M."/>
            <person name="Zimmer R."/>
            <person name="Haas R."/>
        </authorList>
    </citation>
    <scope>NUCLEOTIDE SEQUENCE [LARGE SCALE GENOMIC DNA]</scope>
    <source>
        <strain>P12</strain>
    </source>
</reference>
<keyword id="KW-0067">ATP-binding</keyword>
<keyword id="KW-0963">Cytoplasm</keyword>
<keyword id="KW-0418">Kinase</keyword>
<keyword id="KW-0520">NAD</keyword>
<keyword id="KW-0521">NADP</keyword>
<keyword id="KW-0547">Nucleotide-binding</keyword>
<keyword id="KW-0808">Transferase</keyword>
<organism>
    <name type="scientific">Helicobacter pylori (strain P12)</name>
    <dbReference type="NCBI Taxonomy" id="570508"/>
    <lineage>
        <taxon>Bacteria</taxon>
        <taxon>Pseudomonadati</taxon>
        <taxon>Campylobacterota</taxon>
        <taxon>Epsilonproteobacteria</taxon>
        <taxon>Campylobacterales</taxon>
        <taxon>Helicobacteraceae</taxon>
        <taxon>Helicobacter</taxon>
    </lineage>
</organism>
<sequence length="284" mass="31712">MKDSHQTIGVFVRPTHYQNPLFKELEQAKEWVLKLLEDEGFESFMIDSLDGAKDERLIEKADAFLCLGGDGTILGALRMTHSYNKPCFGVRIGNLGFLSAVELNGLKDFLQDLKQDRIKLEEHLALEGRIGNTSFYAINEIVIAKKKALGVLDIKAYAGHTPFNTYKGDGLIIATPLGSTAYNLSAHGPIVHALSQSYILTPLCDFSLTQRPLVLGAEFCLNFCTHEDALVVIDGQSTYDLKANQPLYIQKSPTTTKLLQKNSRDYFKVLKEKLLWGESPSKKR</sequence>